<accession>Q76KJ8</accession>
<accession>P21877</accession>
<accession>P37717</accession>
<sequence>MPEVRSSTQSESGMSQWMGKILSIRGAGLIIGVFGLCALIAATSVTLPPEQQLIVAFVCVVIFFIVGHKPSRRSQIFLEVLSGLVSLRYLTWRLTETLSFDTWLQGLLGTMLLVAELYALMMLFLSYFQTIAPLHRAPLPLPPNPDEWPTVDIFVPTYNEELSIVRLTVLGSLGIDWPPEKVRVHILDDGRRPEFAAFAAECGANYIARPTNEHAKAGNLNYAIGHTDGDYILIFDCDHVPTRAFLQLTMGWMVEDPKIALMQTPHHFYSPDPFQRNLSAGYRTPPEGNLFYGVVQDGNDFWDATFFCGSCAILRRTAIEQIGGFATQTVTEDAHTALKMQRLGWSTAYLRIPLAGGLATERLILHIGQRVRWARGMLQIFRIDNPLFGRGLSWGQRLCYLSAMTSFLFAVPRVIFLSSPLAFLFFGQNIIAASPLALLAYAIPHMFHAVGTASKINKGWRYSFWSEVYETTMALFLVRVTIVTLLSPSRGKFNVTDKGGLLEKGYFDLGAVYPNIILGLIMFGGLARGVYELSFGHLDQIAERAYLLNSAWAMLSLIIILAAIAVGRETQQKRNSHRIPATIPVEVANADGSIIVTGVTEDLSMGGAAVKMSWPAKLSGPTPVYIRTVLDGEELILPARIIRAGNGRGIFIWTIDNLQQEFSVIRLVFGRADAWVDWGNYKADRPLLSLMDMVLSVKGLFRSSGDIVHRSSPTKPSAGNALSDDTNNPSRKERVLKGTVKMVSLLALLTFASSAQAASAPRAVAAKAPAHQPEASDLPPLPALLPATSGAAQAGSGDAGADGPGSPTGQPLAADSADALVENAENTSDTATVHNYTLKDLGAAGSITMRGLAPLQGIEFGIPSDQLVTSARLVLSGSMSPNLRPETNSVTMTLNEQYIGTLRPDPAHPTFGPMSFEINPIFFVSGNRLNFNFASGSKGCSDITNDTLWATISQNSQLQITTIALPPRRLLSRLPQPFYDKNVRQHVTVPMVLAQTYDPQILKSAGILASWFGKQTDFLGVTFPVSSTIPQSGNAILIGVADELPTSFGRPQVNGPAVLELPNPSDANATILVVTGRDRDEVITASKGIAFASAPLPTDSHMDVAPVDIAPRKPNDAPSFIAMDHPVRFGDLVTASKLQGTGFTSGVLSVPFRIPPDLYTWRNRPYKMQVRFRSPAGEAKDVEKSRLDVGINEVYLHSYPLRETHGLIGAVLQGVGLARPASGMQVHDLDVPPWTVFGQDQLNFYFDAMPLARGICQSGAANNAFHLGLDPDSTIDFSRAHHIAQMPNLAYMATVGFPFTTYADLSQTAVVLPEHPNAATVGAYLDLMGFMGAATWYPVAGVDIVSADHVSDVADRNLLVISTLATSGEIAPLLSRSSYEVADGHLRTVSHASALDNAIKAVDDPLTAFRDRDSKPQDVDTPLTGGVGAMIEAESPLTAGRTVLALLSSDGAGLNNLLQMLGERKKQANIQGDLVVAHGEDLSSYRTSPVYTIGTLPLWLWPDWYMHNRPVRVLLVGLLGCILIVSVLARALARHAARRFKQLEDERRKS</sequence>
<comment type="function">
    <text>Bifunctional protein comprised of a catalytic subunit and a regulatory subunit. The catalytic subunit of cellulose synthase polymerizes uridine 5'-diphosphate glucose to cellulose in a processive way. The thick cellulosic mats generated by this enzyme probably provide a specialized protective environment to the bacterium. The regulatory subunit binds bis-(3'-5') cyclic diguanylic acid (c-di-GMP).</text>
</comment>
<comment type="catalytic activity">
    <reaction>
        <text>[(1-&gt;4)-beta-D-glucosyl](n) + UDP-alpha-D-glucose = [(1-&gt;4)-beta-D-glucosyl](n+1) + UDP + H(+)</text>
        <dbReference type="Rhea" id="RHEA:19929"/>
        <dbReference type="Rhea" id="RHEA-COMP:10033"/>
        <dbReference type="Rhea" id="RHEA-COMP:10034"/>
        <dbReference type="ChEBI" id="CHEBI:15378"/>
        <dbReference type="ChEBI" id="CHEBI:18246"/>
        <dbReference type="ChEBI" id="CHEBI:58223"/>
        <dbReference type="ChEBI" id="CHEBI:58885"/>
        <dbReference type="EC" id="2.4.1.12"/>
    </reaction>
</comment>
<comment type="cofactor">
    <cofactor evidence="1">
        <name>Mg(2+)</name>
        <dbReference type="ChEBI" id="CHEBI:18420"/>
    </cofactor>
</comment>
<comment type="pathway">
    <text>Glycan metabolism; bacterial cellulose biosynthesis.</text>
</comment>
<comment type="subcellular location">
    <subcellularLocation>
        <location evidence="5">Cell inner membrane</location>
        <topology evidence="5">Multi-pass membrane protein</topology>
    </subcellularLocation>
</comment>
<comment type="domain">
    <text>There are two conserved domains in the globular part of the catalytic subunit: the N-terminal domain (domain A) contains the conserved DXD motif and is possibly involved in catalysis and substrate binding. The C-terminal domain (domain B) contains the QXXRW motif and is present only in processive glycosyl transferases. It could be involved in the processivity function of the enzyme, possibly required for holding the growing glycan chain in the active site.</text>
</comment>
<comment type="similarity">
    <text evidence="5">In the N-terminal section; belongs to the glycosyltransferase 2 family.</text>
</comment>
<comment type="similarity">
    <text evidence="5">In the C-terminal section; belongs to the AcsB/BcsB family.</text>
</comment>
<reference key="1">
    <citation type="submission" date="2002-08" db="EMBL/GenBank/DDBJ databases">
        <title>Cloning of cellulose synthesis related genes from Acetobacter xylinum ATCC 23769 and ATCC 53582: comparison of cellulose synthetic ability between ATCC 23769 and ATCC 53582.</title>
        <authorList>
            <person name="Kawano S."/>
            <person name="Tajima K."/>
            <person name="Uemori Y."/>
            <person name="Yamashita H."/>
            <person name="Erata T."/>
            <person name="Munekata M."/>
            <person name="Takai M."/>
        </authorList>
    </citation>
    <scope>NUCLEOTIDE SEQUENCE [GENOMIC DNA]</scope>
    <source>
        <strain>ATCC 23769 / NCIMB 8246</strain>
    </source>
</reference>
<reference key="2">
    <citation type="journal article" date="1994" name="J. Bacteriol.">
        <title>A new gene required for cellulose production and a gene encoding cellulolytic activity in Acetobacter xylinum are colocalized with the bcs operon.</title>
        <authorList>
            <person name="Standal R."/>
            <person name="Iversen T.-G."/>
            <person name="Coucheron D.H."/>
            <person name="Fjaervik E."/>
            <person name="Blatny J.M."/>
            <person name="Valla S."/>
        </authorList>
    </citation>
    <scope>NUCLEOTIDE SEQUENCE [GENOMIC DNA] OF 1-8</scope>
    <source>
        <strain>ATCC 23769 / NCIMB 8246</strain>
    </source>
</reference>
<reference key="3">
    <citation type="journal article" date="2001" name="Phytochemistry">
        <title>Structure-function characterization of cellulose synthase: relationship to other glycosyltransferases.</title>
        <authorList>
            <person name="Saxena I.M."/>
            <person name="Brown R.M. Jr."/>
            <person name="Dandekar T."/>
        </authorList>
    </citation>
    <scope>3D-STRUCTURE MODELING</scope>
    <scope>MUTAGENESIS OF ASP-188; ASP-189; ASP-236; ASP-333; GLN-369; ARG-370 AND ARG-372</scope>
    <source>
        <strain>ATCC 23769 / NCIMB 8246</strain>
    </source>
</reference>
<feature type="chain" id="PRO_0000409025" description="Cellulose synthase 1">
    <location>
        <begin position="1"/>
        <end position="1550"/>
    </location>
</feature>
<feature type="transmembrane region" description="Helical" evidence="2">
    <location>
        <begin position="26"/>
        <end position="46"/>
    </location>
</feature>
<feature type="transmembrane region" description="Helical" evidence="2">
    <location>
        <begin position="47"/>
        <end position="67"/>
    </location>
</feature>
<feature type="transmembrane region" description="Helical" evidence="2">
    <location>
        <begin position="106"/>
        <end position="126"/>
    </location>
</feature>
<feature type="transmembrane region" description="Helical" evidence="2">
    <location>
        <begin position="398"/>
        <end position="418"/>
    </location>
</feature>
<feature type="transmembrane region" description="Helical" evidence="2">
    <location>
        <begin position="423"/>
        <end position="443"/>
    </location>
</feature>
<feature type="transmembrane region" description="Helical" evidence="2">
    <location>
        <begin position="468"/>
        <end position="488"/>
    </location>
</feature>
<feature type="transmembrane region" description="Helical" evidence="2">
    <location>
        <begin position="507"/>
        <end position="527"/>
    </location>
</feature>
<feature type="transmembrane region" description="Helical" evidence="2">
    <location>
        <begin position="547"/>
        <end position="567"/>
    </location>
</feature>
<feature type="transmembrane region" description="Helical" evidence="2">
    <location>
        <begin position="1513"/>
        <end position="1533"/>
    </location>
</feature>
<feature type="domain" description="PilZ">
    <location>
        <begin position="572"/>
        <end position="647"/>
    </location>
</feature>
<feature type="region of interest" description="Catalytic">
    <location>
        <begin position="1"/>
        <end position="741"/>
    </location>
</feature>
<feature type="region of interest" description="Catalytic subdomain A">
    <location>
        <begin position="147"/>
        <end position="240"/>
    </location>
</feature>
<feature type="region of interest" description="Catalytic subdomain B">
    <location>
        <begin position="317"/>
        <end position="377"/>
    </location>
</feature>
<feature type="region of interest" description="Disordered" evidence="3">
    <location>
        <begin position="708"/>
        <end position="731"/>
    </location>
</feature>
<feature type="region of interest" description="Cyclic di-GMP binding domain">
    <location>
        <begin position="742"/>
        <end position="1550"/>
    </location>
</feature>
<feature type="region of interest" description="Disordered" evidence="3">
    <location>
        <begin position="768"/>
        <end position="813"/>
    </location>
</feature>
<feature type="compositionally biased region" description="Low complexity" evidence="3">
    <location>
        <begin position="768"/>
        <end position="796"/>
    </location>
</feature>
<feature type="active site" evidence="2">
    <location>
        <position position="189"/>
    </location>
</feature>
<feature type="active site" evidence="2">
    <location>
        <position position="333"/>
    </location>
</feature>
<feature type="binding site" evidence="2">
    <location>
        <position position="236"/>
    </location>
    <ligand>
        <name>substrate</name>
    </ligand>
</feature>
<feature type="binding site" evidence="2">
    <location>
        <position position="238"/>
    </location>
    <ligand>
        <name>substrate</name>
    </ligand>
</feature>
<feature type="mutagenesis site" description="Decrease in activity." evidence="4">
    <original>D</original>
    <variation>N</variation>
    <location>
        <position position="188"/>
    </location>
</feature>
<feature type="mutagenesis site" description="Loss of activity." evidence="4">
    <original>D</original>
    <variation>P</variation>
    <location>
        <position position="188"/>
    </location>
</feature>
<feature type="mutagenesis site" description="Loss of activity." evidence="4">
    <original>D</original>
    <variation>Y</variation>
    <location>
        <position position="189"/>
    </location>
</feature>
<feature type="mutagenesis site" description="Loss of activity." evidence="4">
    <original>D</original>
    <variation>Y</variation>
    <location>
        <position position="236"/>
    </location>
</feature>
<feature type="mutagenesis site" description="Loss of activity." evidence="4">
    <original>D</original>
    <variation>R</variation>
    <location>
        <position position="333"/>
    </location>
</feature>
<feature type="mutagenesis site" description="Loss of activity." evidence="4">
    <original>Q</original>
    <variation>M</variation>
    <location>
        <position position="369"/>
    </location>
</feature>
<feature type="mutagenesis site" description="Loss of activity." evidence="4">
    <original>R</original>
    <variation>P</variation>
    <location>
        <position position="370"/>
    </location>
</feature>
<feature type="mutagenesis site" description="Decrease in activity." evidence="4">
    <original>R</original>
    <variation>Q</variation>
    <location>
        <position position="370"/>
    </location>
</feature>
<feature type="mutagenesis site" description="Loss of activity." evidence="4">
    <original>R</original>
    <variation>A</variation>
    <location>
        <position position="372"/>
    </location>
</feature>
<keyword id="KW-0973">c-di-GMP</keyword>
<keyword id="KW-0997">Cell inner membrane</keyword>
<keyword id="KW-1003">Cell membrane</keyword>
<keyword id="KW-0135">Cellulose biosynthesis</keyword>
<keyword id="KW-0328">Glycosyltransferase</keyword>
<keyword id="KW-0472">Membrane</keyword>
<keyword id="KW-0808">Transferase</keyword>
<keyword id="KW-0812">Transmembrane</keyword>
<keyword id="KW-1133">Transmembrane helix</keyword>
<evidence type="ECO:0000250" key="1"/>
<evidence type="ECO:0000255" key="2"/>
<evidence type="ECO:0000256" key="3">
    <source>
        <dbReference type="SAM" id="MobiDB-lite"/>
    </source>
</evidence>
<evidence type="ECO:0000269" key="4">
    <source>
    </source>
</evidence>
<evidence type="ECO:0000305" key="5"/>
<organism>
    <name type="scientific">Novacetimonas hansenii</name>
    <name type="common">Komagataeibacter hansenii</name>
    <dbReference type="NCBI Taxonomy" id="436"/>
    <lineage>
        <taxon>Bacteria</taxon>
        <taxon>Pseudomonadati</taxon>
        <taxon>Pseudomonadota</taxon>
        <taxon>Alphaproteobacteria</taxon>
        <taxon>Acetobacterales</taxon>
        <taxon>Acetobacteraceae</taxon>
        <taxon>Novacetimonas</taxon>
    </lineage>
</organism>
<name>ACSA1_NOVHA</name>
<gene>
    <name type="primary">acsAB</name>
    <name type="synonym">acsA</name>
    <name type="synonym">acsB</name>
</gene>
<proteinExistence type="evidence at protein level"/>
<protein>
    <recommendedName>
        <fullName>Cellulose synthase 1</fullName>
    </recommendedName>
    <domain>
        <recommendedName>
            <fullName>Cellulose synthase catalytic domain [UDP-forming]</fullName>
            <ecNumber>2.4.1.12</ecNumber>
        </recommendedName>
    </domain>
    <domain>
        <recommendedName>
            <fullName>Cyclic di-GMP-binding domain</fullName>
        </recommendedName>
        <alternativeName>
            <fullName>Cellulose synthase 1 regulatory domain</fullName>
        </alternativeName>
    </domain>
</protein>
<dbReference type="EC" id="2.4.1.12"/>
<dbReference type="EMBL" id="AB091060">
    <property type="protein sequence ID" value="BAC82543.1"/>
    <property type="molecule type" value="Genomic_DNA"/>
</dbReference>
<dbReference type="EMBL" id="M96060">
    <property type="protein sequence ID" value="AAA16971.1"/>
    <property type="molecule type" value="Unassigned_DNA"/>
</dbReference>
<dbReference type="PIR" id="S13732">
    <property type="entry name" value="C36963"/>
</dbReference>
<dbReference type="EMDB" id="EMD-8075"/>
<dbReference type="SMR" id="Q76KJ8"/>
<dbReference type="CAZy" id="GT2">
    <property type="family name" value="Glycosyltransferase Family 2"/>
</dbReference>
<dbReference type="UniPathway" id="UPA00694"/>
<dbReference type="GO" id="GO:0005886">
    <property type="term" value="C:plasma membrane"/>
    <property type="evidence" value="ECO:0007669"/>
    <property type="project" value="UniProtKB-SubCell"/>
</dbReference>
<dbReference type="GO" id="GO:0016760">
    <property type="term" value="F:cellulose synthase (UDP-forming) activity"/>
    <property type="evidence" value="ECO:0007669"/>
    <property type="project" value="UniProtKB-EC"/>
</dbReference>
<dbReference type="GO" id="GO:0035438">
    <property type="term" value="F:cyclic-di-GMP binding"/>
    <property type="evidence" value="ECO:0007669"/>
    <property type="project" value="InterPro"/>
</dbReference>
<dbReference type="GO" id="GO:0030244">
    <property type="term" value="P:cellulose biosynthetic process"/>
    <property type="evidence" value="ECO:0007669"/>
    <property type="project" value="UniProtKB-KW"/>
</dbReference>
<dbReference type="GO" id="GO:0006011">
    <property type="term" value="P:UDP-alpha-D-glucose metabolic process"/>
    <property type="evidence" value="ECO:0007669"/>
    <property type="project" value="InterPro"/>
</dbReference>
<dbReference type="CDD" id="cd06421">
    <property type="entry name" value="CESA_CelA_like"/>
    <property type="match status" value="1"/>
</dbReference>
<dbReference type="Gene3D" id="2.60.120.260">
    <property type="entry name" value="Galactose-binding domain-like"/>
    <property type="match status" value="2"/>
</dbReference>
<dbReference type="Gene3D" id="2.40.10.220">
    <property type="entry name" value="predicted glycosyltransferase like domains"/>
    <property type="match status" value="1"/>
</dbReference>
<dbReference type="Gene3D" id="3.90.550.10">
    <property type="entry name" value="Spore Coat Polysaccharide Biosynthesis Protein SpsA, Chain A"/>
    <property type="match status" value="1"/>
</dbReference>
<dbReference type="InterPro" id="IPR003919">
    <property type="entry name" value="Cell_synth_A"/>
</dbReference>
<dbReference type="InterPro" id="IPR003920">
    <property type="entry name" value="Cell_synth_B"/>
</dbReference>
<dbReference type="InterPro" id="IPR018513">
    <property type="entry name" value="Cell_synthase_bac"/>
</dbReference>
<dbReference type="InterPro" id="IPR001173">
    <property type="entry name" value="Glyco_trans_2-like"/>
</dbReference>
<dbReference type="InterPro" id="IPR050321">
    <property type="entry name" value="Glycosyltr_2/OpgH_subfam"/>
</dbReference>
<dbReference type="InterPro" id="IPR029044">
    <property type="entry name" value="Nucleotide-diphossugar_trans"/>
</dbReference>
<dbReference type="InterPro" id="IPR009875">
    <property type="entry name" value="PilZ_domain"/>
</dbReference>
<dbReference type="NCBIfam" id="TIGR03030">
    <property type="entry name" value="CelA"/>
    <property type="match status" value="1"/>
</dbReference>
<dbReference type="PANTHER" id="PTHR43867">
    <property type="entry name" value="CELLULOSE SYNTHASE CATALYTIC SUBUNIT A [UDP-FORMING]"/>
    <property type="match status" value="1"/>
</dbReference>
<dbReference type="PANTHER" id="PTHR43867:SF2">
    <property type="entry name" value="CELLULOSE SYNTHASE CATALYTIC SUBUNIT A [UDP-FORMING]"/>
    <property type="match status" value="1"/>
</dbReference>
<dbReference type="Pfam" id="PF03170">
    <property type="entry name" value="BcsB"/>
    <property type="match status" value="1"/>
</dbReference>
<dbReference type="Pfam" id="PF00535">
    <property type="entry name" value="Glycos_transf_2"/>
    <property type="match status" value="1"/>
</dbReference>
<dbReference type="Pfam" id="PF07238">
    <property type="entry name" value="PilZ"/>
    <property type="match status" value="1"/>
</dbReference>
<dbReference type="PRINTS" id="PR01440">
    <property type="entry name" value="CELLSNTHASEB"/>
</dbReference>
<dbReference type="SUPFAM" id="SSF53448">
    <property type="entry name" value="Nucleotide-diphospho-sugar transferases"/>
    <property type="match status" value="1"/>
</dbReference>
<dbReference type="SUPFAM" id="SSF141371">
    <property type="entry name" value="PilZ domain-like"/>
    <property type="match status" value="1"/>
</dbReference>